<sequence length="441" mass="49613">MSNVTHQPKIGFVSLGCPKNLVDSERILTELRTEGYDVVPRYDDADMVIVNTCGFIDSAVQESLEAIGEALNENGKVIVTGCLGAKEDQIREVHPKVLEITGPHSYEQVLQHVHHYVPKPKHNPFLSLVPEQGVKLTPRHYAYLKISEGCNHRCTFCIIPSMRGDLVSRPIGDVLSEAKRLVDAGVKEILVISQDTSAYGVDVKHRTGFHNGEPVKTSMVSLCEQLSKLGVWTRLHYVYPYPHVDDVIPLMAEGKILPYLDIPLQHASPRILKLMKRPGSVDRQLARIKQWREICPELTLRSTFIVGFPGETEEDFQMLLDFLKEARLDRVGCFKYSPVEGAGANELPDQVPEEVKEERWNRFMQLQQQISAERLQEKVGREILVIVDEVDEEGAIGRSMADAPEIDGAVYLNGETNVKLGDIVRVKVENADEYDLWGSRV</sequence>
<evidence type="ECO:0000255" key="1">
    <source>
        <dbReference type="HAMAP-Rule" id="MF_01865"/>
    </source>
</evidence>
<evidence type="ECO:0000255" key="2">
    <source>
        <dbReference type="PROSITE-ProRule" id="PRU01266"/>
    </source>
</evidence>
<protein>
    <recommendedName>
        <fullName evidence="1">Ribosomal protein uS12 methylthiotransferase RimO</fullName>
        <shortName evidence="1">uS12 MTTase</shortName>
        <shortName evidence="1">uS12 methylthiotransferase</shortName>
        <ecNumber evidence="1">2.8.4.4</ecNumber>
    </recommendedName>
    <alternativeName>
        <fullName evidence="1">Ribosomal protein uS12 (aspartate-C(3))-methylthiotransferase</fullName>
    </alternativeName>
    <alternativeName>
        <fullName evidence="1">Ribosome maturation factor RimO</fullName>
    </alternativeName>
</protein>
<comment type="function">
    <text evidence="1">Catalyzes the methylthiolation of an aspartic acid residue of ribosomal protein uS12.</text>
</comment>
<comment type="catalytic activity">
    <reaction evidence="1">
        <text>L-aspartate(89)-[ribosomal protein uS12]-hydrogen + (sulfur carrier)-SH + AH2 + 2 S-adenosyl-L-methionine = 3-methylsulfanyl-L-aspartate(89)-[ribosomal protein uS12]-hydrogen + (sulfur carrier)-H + 5'-deoxyadenosine + L-methionine + A + S-adenosyl-L-homocysteine + 2 H(+)</text>
        <dbReference type="Rhea" id="RHEA:37087"/>
        <dbReference type="Rhea" id="RHEA-COMP:10460"/>
        <dbReference type="Rhea" id="RHEA-COMP:10461"/>
        <dbReference type="Rhea" id="RHEA-COMP:14737"/>
        <dbReference type="Rhea" id="RHEA-COMP:14739"/>
        <dbReference type="ChEBI" id="CHEBI:13193"/>
        <dbReference type="ChEBI" id="CHEBI:15378"/>
        <dbReference type="ChEBI" id="CHEBI:17319"/>
        <dbReference type="ChEBI" id="CHEBI:17499"/>
        <dbReference type="ChEBI" id="CHEBI:29917"/>
        <dbReference type="ChEBI" id="CHEBI:29961"/>
        <dbReference type="ChEBI" id="CHEBI:57844"/>
        <dbReference type="ChEBI" id="CHEBI:57856"/>
        <dbReference type="ChEBI" id="CHEBI:59789"/>
        <dbReference type="ChEBI" id="CHEBI:64428"/>
        <dbReference type="ChEBI" id="CHEBI:73599"/>
        <dbReference type="EC" id="2.8.4.4"/>
    </reaction>
</comment>
<comment type="cofactor">
    <cofactor evidence="1">
        <name>[4Fe-4S] cluster</name>
        <dbReference type="ChEBI" id="CHEBI:49883"/>
    </cofactor>
    <text evidence="1">Binds 2 [4Fe-4S] clusters. One cluster is coordinated with 3 cysteines and an exchangeable S-adenosyl-L-methionine.</text>
</comment>
<comment type="subcellular location">
    <subcellularLocation>
        <location evidence="1">Cytoplasm</location>
    </subcellularLocation>
</comment>
<comment type="similarity">
    <text evidence="1">Belongs to the methylthiotransferase family. RimO subfamily.</text>
</comment>
<gene>
    <name evidence="1" type="primary">rimO</name>
    <name type="ordered locus">SPA1903</name>
</gene>
<keyword id="KW-0004">4Fe-4S</keyword>
<keyword id="KW-0963">Cytoplasm</keyword>
<keyword id="KW-0408">Iron</keyword>
<keyword id="KW-0411">Iron-sulfur</keyword>
<keyword id="KW-0479">Metal-binding</keyword>
<keyword id="KW-0949">S-adenosyl-L-methionine</keyword>
<keyword id="KW-0808">Transferase</keyword>
<feature type="chain" id="PRO_0000374993" description="Ribosomal protein uS12 methylthiotransferase RimO">
    <location>
        <begin position="1"/>
        <end position="441"/>
    </location>
</feature>
<feature type="domain" description="MTTase N-terminal" evidence="1">
    <location>
        <begin position="8"/>
        <end position="118"/>
    </location>
</feature>
<feature type="domain" description="Radical SAM core" evidence="2">
    <location>
        <begin position="136"/>
        <end position="373"/>
    </location>
</feature>
<feature type="domain" description="TRAM" evidence="1">
    <location>
        <begin position="376"/>
        <end position="441"/>
    </location>
</feature>
<feature type="binding site" evidence="1">
    <location>
        <position position="17"/>
    </location>
    <ligand>
        <name>[4Fe-4S] cluster</name>
        <dbReference type="ChEBI" id="CHEBI:49883"/>
        <label>1</label>
    </ligand>
</feature>
<feature type="binding site" evidence="1">
    <location>
        <position position="53"/>
    </location>
    <ligand>
        <name>[4Fe-4S] cluster</name>
        <dbReference type="ChEBI" id="CHEBI:49883"/>
        <label>1</label>
    </ligand>
</feature>
<feature type="binding site" evidence="1">
    <location>
        <position position="82"/>
    </location>
    <ligand>
        <name>[4Fe-4S] cluster</name>
        <dbReference type="ChEBI" id="CHEBI:49883"/>
        <label>1</label>
    </ligand>
</feature>
<feature type="binding site" evidence="1">
    <location>
        <position position="150"/>
    </location>
    <ligand>
        <name>[4Fe-4S] cluster</name>
        <dbReference type="ChEBI" id="CHEBI:49883"/>
        <label>2</label>
        <note>4Fe-4S-S-AdoMet</note>
    </ligand>
</feature>
<feature type="binding site" evidence="1">
    <location>
        <position position="154"/>
    </location>
    <ligand>
        <name>[4Fe-4S] cluster</name>
        <dbReference type="ChEBI" id="CHEBI:49883"/>
        <label>2</label>
        <note>4Fe-4S-S-AdoMet</note>
    </ligand>
</feature>
<feature type="binding site" evidence="1">
    <location>
        <position position="157"/>
    </location>
    <ligand>
        <name>[4Fe-4S] cluster</name>
        <dbReference type="ChEBI" id="CHEBI:49883"/>
        <label>2</label>
        <note>4Fe-4S-S-AdoMet</note>
    </ligand>
</feature>
<proteinExistence type="inferred from homology"/>
<organism>
    <name type="scientific">Salmonella paratyphi A (strain ATCC 9150 / SARB42)</name>
    <dbReference type="NCBI Taxonomy" id="295319"/>
    <lineage>
        <taxon>Bacteria</taxon>
        <taxon>Pseudomonadati</taxon>
        <taxon>Pseudomonadota</taxon>
        <taxon>Gammaproteobacteria</taxon>
        <taxon>Enterobacterales</taxon>
        <taxon>Enterobacteriaceae</taxon>
        <taxon>Salmonella</taxon>
    </lineage>
</organism>
<name>RIMO_SALPA</name>
<reference key="1">
    <citation type="journal article" date="2004" name="Nat. Genet.">
        <title>Comparison of genome degradation in Paratyphi A and Typhi, human-restricted serovars of Salmonella enterica that cause typhoid.</title>
        <authorList>
            <person name="McClelland M."/>
            <person name="Sanderson K.E."/>
            <person name="Clifton S.W."/>
            <person name="Latreille P."/>
            <person name="Porwollik S."/>
            <person name="Sabo A."/>
            <person name="Meyer R."/>
            <person name="Bieri T."/>
            <person name="Ozersky P."/>
            <person name="McLellan M."/>
            <person name="Harkins C.R."/>
            <person name="Wang C."/>
            <person name="Nguyen C."/>
            <person name="Berghoff A."/>
            <person name="Elliott G."/>
            <person name="Kohlberg S."/>
            <person name="Strong C."/>
            <person name="Du F."/>
            <person name="Carter J."/>
            <person name="Kremizki C."/>
            <person name="Layman D."/>
            <person name="Leonard S."/>
            <person name="Sun H."/>
            <person name="Fulton L."/>
            <person name="Nash W."/>
            <person name="Miner T."/>
            <person name="Minx P."/>
            <person name="Delehaunty K."/>
            <person name="Fronick C."/>
            <person name="Magrini V."/>
            <person name="Nhan M."/>
            <person name="Warren W."/>
            <person name="Florea L."/>
            <person name="Spieth J."/>
            <person name="Wilson R.K."/>
        </authorList>
    </citation>
    <scope>NUCLEOTIDE SEQUENCE [LARGE SCALE GENOMIC DNA]</scope>
    <source>
        <strain>ATCC 9150 / SARB42</strain>
    </source>
</reference>
<accession>Q5PGP7</accession>
<dbReference type="EC" id="2.8.4.4" evidence="1"/>
<dbReference type="EMBL" id="CP000026">
    <property type="protein sequence ID" value="AAV77814.1"/>
    <property type="molecule type" value="Genomic_DNA"/>
</dbReference>
<dbReference type="RefSeq" id="WP_000073316.1">
    <property type="nucleotide sequence ID" value="NC_006511.1"/>
</dbReference>
<dbReference type="SMR" id="Q5PGP7"/>
<dbReference type="KEGG" id="spt:SPA1903"/>
<dbReference type="HOGENOM" id="CLU_018697_0_0_6"/>
<dbReference type="Proteomes" id="UP000008185">
    <property type="component" value="Chromosome"/>
</dbReference>
<dbReference type="GO" id="GO:0005829">
    <property type="term" value="C:cytosol"/>
    <property type="evidence" value="ECO:0007669"/>
    <property type="project" value="TreeGrafter"/>
</dbReference>
<dbReference type="GO" id="GO:0051539">
    <property type="term" value="F:4 iron, 4 sulfur cluster binding"/>
    <property type="evidence" value="ECO:0007669"/>
    <property type="project" value="UniProtKB-UniRule"/>
</dbReference>
<dbReference type="GO" id="GO:0035599">
    <property type="term" value="F:aspartic acid methylthiotransferase activity"/>
    <property type="evidence" value="ECO:0007669"/>
    <property type="project" value="TreeGrafter"/>
</dbReference>
<dbReference type="GO" id="GO:0046872">
    <property type="term" value="F:metal ion binding"/>
    <property type="evidence" value="ECO:0007669"/>
    <property type="project" value="UniProtKB-KW"/>
</dbReference>
<dbReference type="GO" id="GO:0103039">
    <property type="term" value="F:protein methylthiotransferase activity"/>
    <property type="evidence" value="ECO:0007669"/>
    <property type="project" value="UniProtKB-EC"/>
</dbReference>
<dbReference type="GO" id="GO:0006400">
    <property type="term" value="P:tRNA modification"/>
    <property type="evidence" value="ECO:0007669"/>
    <property type="project" value="InterPro"/>
</dbReference>
<dbReference type="CDD" id="cd01335">
    <property type="entry name" value="Radical_SAM"/>
    <property type="match status" value="1"/>
</dbReference>
<dbReference type="FunFam" id="2.40.50.140:FF:000060">
    <property type="entry name" value="Ribosomal protein S12 methylthiotransferase RimO"/>
    <property type="match status" value="1"/>
</dbReference>
<dbReference type="FunFam" id="3.40.50.12160:FF:000002">
    <property type="entry name" value="Ribosomal protein S12 methylthiotransferase RimO"/>
    <property type="match status" value="1"/>
</dbReference>
<dbReference type="FunFam" id="3.80.30.20:FF:000001">
    <property type="entry name" value="tRNA-2-methylthio-N(6)-dimethylallyladenosine synthase 2"/>
    <property type="match status" value="1"/>
</dbReference>
<dbReference type="Gene3D" id="3.40.50.12160">
    <property type="entry name" value="Methylthiotransferase, N-terminal domain"/>
    <property type="match status" value="1"/>
</dbReference>
<dbReference type="Gene3D" id="2.40.50.140">
    <property type="entry name" value="Nucleic acid-binding proteins"/>
    <property type="match status" value="1"/>
</dbReference>
<dbReference type="Gene3D" id="3.80.30.20">
    <property type="entry name" value="tm_1862 like domain"/>
    <property type="match status" value="1"/>
</dbReference>
<dbReference type="HAMAP" id="MF_01865">
    <property type="entry name" value="MTTase_RimO"/>
    <property type="match status" value="1"/>
</dbReference>
<dbReference type="InterPro" id="IPR006638">
    <property type="entry name" value="Elp3/MiaA/NifB-like_rSAM"/>
</dbReference>
<dbReference type="InterPro" id="IPR005839">
    <property type="entry name" value="Methylthiotransferase"/>
</dbReference>
<dbReference type="InterPro" id="IPR020612">
    <property type="entry name" value="Methylthiotransferase_CS"/>
</dbReference>
<dbReference type="InterPro" id="IPR013848">
    <property type="entry name" value="Methylthiotransferase_N"/>
</dbReference>
<dbReference type="InterPro" id="IPR038135">
    <property type="entry name" value="Methylthiotransferase_N_sf"/>
</dbReference>
<dbReference type="InterPro" id="IPR012340">
    <property type="entry name" value="NA-bd_OB-fold"/>
</dbReference>
<dbReference type="InterPro" id="IPR005840">
    <property type="entry name" value="Ribosomal_uS12_MeSTrfase_RimO"/>
</dbReference>
<dbReference type="InterPro" id="IPR007197">
    <property type="entry name" value="rSAM"/>
</dbReference>
<dbReference type="InterPro" id="IPR023404">
    <property type="entry name" value="rSAM_horseshoe"/>
</dbReference>
<dbReference type="InterPro" id="IPR002792">
    <property type="entry name" value="TRAM_dom"/>
</dbReference>
<dbReference type="NCBIfam" id="TIGR01125">
    <property type="entry name" value="30S ribosomal protein S12 methylthiotransferase RimO"/>
    <property type="match status" value="1"/>
</dbReference>
<dbReference type="NCBIfam" id="TIGR00089">
    <property type="entry name" value="MiaB/RimO family radical SAM methylthiotransferase"/>
    <property type="match status" value="1"/>
</dbReference>
<dbReference type="PANTHER" id="PTHR43837">
    <property type="entry name" value="RIBOSOMAL PROTEIN S12 METHYLTHIOTRANSFERASE RIMO"/>
    <property type="match status" value="1"/>
</dbReference>
<dbReference type="PANTHER" id="PTHR43837:SF1">
    <property type="entry name" value="RIBOSOMAL PROTEIN US12 METHYLTHIOTRANSFERASE RIMO"/>
    <property type="match status" value="1"/>
</dbReference>
<dbReference type="Pfam" id="PF04055">
    <property type="entry name" value="Radical_SAM"/>
    <property type="match status" value="1"/>
</dbReference>
<dbReference type="Pfam" id="PF18693">
    <property type="entry name" value="TRAM_2"/>
    <property type="match status" value="1"/>
</dbReference>
<dbReference type="Pfam" id="PF00919">
    <property type="entry name" value="UPF0004"/>
    <property type="match status" value="1"/>
</dbReference>
<dbReference type="SFLD" id="SFLDG01082">
    <property type="entry name" value="B12-binding_domain_containing"/>
    <property type="match status" value="1"/>
</dbReference>
<dbReference type="SFLD" id="SFLDS00029">
    <property type="entry name" value="Radical_SAM"/>
    <property type="match status" value="1"/>
</dbReference>
<dbReference type="SFLD" id="SFLDF00274">
    <property type="entry name" value="ribosomal_protein_S12_methylth"/>
    <property type="match status" value="1"/>
</dbReference>
<dbReference type="SMART" id="SM00729">
    <property type="entry name" value="Elp3"/>
    <property type="match status" value="1"/>
</dbReference>
<dbReference type="SUPFAM" id="SSF102114">
    <property type="entry name" value="Radical SAM enzymes"/>
    <property type="match status" value="1"/>
</dbReference>
<dbReference type="PROSITE" id="PS51449">
    <property type="entry name" value="MTTASE_N"/>
    <property type="match status" value="1"/>
</dbReference>
<dbReference type="PROSITE" id="PS01278">
    <property type="entry name" value="MTTASE_RADICAL"/>
    <property type="match status" value="1"/>
</dbReference>
<dbReference type="PROSITE" id="PS51918">
    <property type="entry name" value="RADICAL_SAM"/>
    <property type="match status" value="1"/>
</dbReference>
<dbReference type="PROSITE" id="PS50926">
    <property type="entry name" value="TRAM"/>
    <property type="match status" value="1"/>
</dbReference>